<organism>
    <name type="scientific">Homo sapiens</name>
    <name type="common">Human</name>
    <dbReference type="NCBI Taxonomy" id="9606"/>
    <lineage>
        <taxon>Eukaryota</taxon>
        <taxon>Metazoa</taxon>
        <taxon>Chordata</taxon>
        <taxon>Craniata</taxon>
        <taxon>Vertebrata</taxon>
        <taxon>Euteleostomi</taxon>
        <taxon>Mammalia</taxon>
        <taxon>Eutheria</taxon>
        <taxon>Euarchontoglires</taxon>
        <taxon>Primates</taxon>
        <taxon>Haplorrhini</taxon>
        <taxon>Catarrhini</taxon>
        <taxon>Hominidae</taxon>
        <taxon>Homo</taxon>
    </lineage>
</organism>
<dbReference type="EMBL" id="AF504646">
    <property type="protein sequence ID" value="AAM28197.1"/>
    <property type="molecule type" value="mRNA"/>
</dbReference>
<dbReference type="EMBL" id="AC104590">
    <property type="status" value="NOT_ANNOTATED_CDS"/>
    <property type="molecule type" value="Genomic_DNA"/>
</dbReference>
<dbReference type="CCDS" id="CCDS32258.1"/>
<dbReference type="RefSeq" id="NP_997205.2">
    <property type="nucleotide sequence ID" value="NM_207322.3"/>
</dbReference>
<dbReference type="SMR" id="Q8NCU7"/>
<dbReference type="BioGRID" id="126930">
    <property type="interactions" value="24"/>
</dbReference>
<dbReference type="FunCoup" id="Q8NCU7">
    <property type="interactions" value="750"/>
</dbReference>
<dbReference type="IntAct" id="Q8NCU7">
    <property type="interactions" value="13"/>
</dbReference>
<dbReference type="MINT" id="Q8NCU7"/>
<dbReference type="STRING" id="9606.ENSP00000347712"/>
<dbReference type="GlyGen" id="Q8NCU7">
    <property type="glycosylation" value="1 site"/>
</dbReference>
<dbReference type="iPTMnet" id="Q8NCU7"/>
<dbReference type="PhosphoSitePlus" id="Q8NCU7"/>
<dbReference type="BioMuta" id="C2CD4A"/>
<dbReference type="DMDM" id="296434416"/>
<dbReference type="jPOST" id="Q8NCU7"/>
<dbReference type="MassIVE" id="Q8NCU7"/>
<dbReference type="PaxDb" id="9606-ENSP00000347712"/>
<dbReference type="PeptideAtlas" id="Q8NCU7"/>
<dbReference type="ProteomicsDB" id="72949"/>
<dbReference type="Antibodypedia" id="82486">
    <property type="antibodies" value="3 antibodies from 3 providers"/>
</dbReference>
<dbReference type="DNASU" id="145741"/>
<dbReference type="Ensembl" id="ENST00000355522.5">
    <property type="protein sequence ID" value="ENSP00000347712.5"/>
    <property type="gene ID" value="ENSG00000198535.5"/>
</dbReference>
<dbReference type="GeneID" id="145741"/>
<dbReference type="KEGG" id="hsa:145741"/>
<dbReference type="MANE-Select" id="ENST00000355522.5">
    <property type="protein sequence ID" value="ENSP00000347712.5"/>
    <property type="RefSeq nucleotide sequence ID" value="NM_207322.3"/>
    <property type="RefSeq protein sequence ID" value="NP_997205.2"/>
</dbReference>
<dbReference type="UCSC" id="uc002ahf.4">
    <property type="organism name" value="human"/>
</dbReference>
<dbReference type="AGR" id="HGNC:33627"/>
<dbReference type="CTD" id="145741"/>
<dbReference type="DisGeNET" id="145741"/>
<dbReference type="GeneCards" id="C2CD4A"/>
<dbReference type="HGNC" id="HGNC:33627">
    <property type="gene designation" value="C2CD4A"/>
</dbReference>
<dbReference type="HPA" id="ENSG00000198535">
    <property type="expression patterns" value="Tissue enhanced (kidney, pituitary gland)"/>
</dbReference>
<dbReference type="MIM" id="610343">
    <property type="type" value="gene"/>
</dbReference>
<dbReference type="neXtProt" id="NX_Q8NCU7"/>
<dbReference type="OpenTargets" id="ENSG00000198535"/>
<dbReference type="PharmGKB" id="PA165478510"/>
<dbReference type="VEuPathDB" id="HostDB:ENSG00000198535"/>
<dbReference type="eggNOG" id="ENOG502S04T">
    <property type="taxonomic scope" value="Eukaryota"/>
</dbReference>
<dbReference type="GeneTree" id="ENSGT00940000163765"/>
<dbReference type="HOGENOM" id="CLU_051964_0_0_1"/>
<dbReference type="InParanoid" id="Q8NCU7"/>
<dbReference type="OMA" id="AFRNSWV"/>
<dbReference type="OrthoDB" id="9947256at2759"/>
<dbReference type="PAN-GO" id="Q8NCU7">
    <property type="GO annotations" value="0 GO annotations based on evolutionary models"/>
</dbReference>
<dbReference type="PhylomeDB" id="Q8NCU7"/>
<dbReference type="TreeFam" id="TF330989"/>
<dbReference type="PathwayCommons" id="Q8NCU7"/>
<dbReference type="SignaLink" id="Q8NCU7"/>
<dbReference type="BioGRID-ORCS" id="145741">
    <property type="hits" value="15 hits in 1154 CRISPR screens"/>
</dbReference>
<dbReference type="GenomeRNAi" id="145741"/>
<dbReference type="Pharos" id="Q8NCU7">
    <property type="development level" value="Tbio"/>
</dbReference>
<dbReference type="PRO" id="PR:Q8NCU7"/>
<dbReference type="Proteomes" id="UP000005640">
    <property type="component" value="Chromosome 15"/>
</dbReference>
<dbReference type="RNAct" id="Q8NCU7">
    <property type="molecule type" value="protein"/>
</dbReference>
<dbReference type="Bgee" id="ENSG00000198535">
    <property type="expression patterns" value="Expressed in islet of Langerhans and 102 other cell types or tissues"/>
</dbReference>
<dbReference type="GO" id="GO:0005730">
    <property type="term" value="C:nucleolus"/>
    <property type="evidence" value="ECO:0000314"/>
    <property type="project" value="HPA"/>
</dbReference>
<dbReference type="GO" id="GO:0005654">
    <property type="term" value="C:nucleoplasm"/>
    <property type="evidence" value="ECO:0000314"/>
    <property type="project" value="HPA"/>
</dbReference>
<dbReference type="GO" id="GO:0005634">
    <property type="term" value="C:nucleus"/>
    <property type="evidence" value="ECO:0000314"/>
    <property type="project" value="UniProtKB"/>
</dbReference>
<dbReference type="GO" id="GO:0002675">
    <property type="term" value="P:positive regulation of acute inflammatory response"/>
    <property type="evidence" value="ECO:0000314"/>
    <property type="project" value="UniProtKB"/>
</dbReference>
<dbReference type="GO" id="GO:0030155">
    <property type="term" value="P:regulation of cell adhesion"/>
    <property type="evidence" value="ECO:0000314"/>
    <property type="project" value="UniProtKB"/>
</dbReference>
<dbReference type="GO" id="GO:0002528">
    <property type="term" value="P:regulation of vascular permeability involved in acute inflammatory response"/>
    <property type="evidence" value="ECO:0000314"/>
    <property type="project" value="UniProtKB"/>
</dbReference>
<dbReference type="InterPro" id="IPR039208">
    <property type="entry name" value="C2_Ca-dependent_4"/>
</dbReference>
<dbReference type="InterPro" id="IPR000008">
    <property type="entry name" value="C2_dom"/>
</dbReference>
<dbReference type="InterPro" id="IPR035892">
    <property type="entry name" value="C2_domain_sf"/>
</dbReference>
<dbReference type="PANTHER" id="PTHR47226">
    <property type="entry name" value="C2 CALCIUM-DEPENDENT DOMAIN-CONTAINING PROTEIN 4A"/>
    <property type="match status" value="1"/>
</dbReference>
<dbReference type="PANTHER" id="PTHR47226:SF3">
    <property type="entry name" value="C2 CALCIUM-DEPENDENT DOMAIN-CONTAINING PROTEIN 4A"/>
    <property type="match status" value="1"/>
</dbReference>
<dbReference type="SUPFAM" id="SSF49562">
    <property type="entry name" value="C2 domain (Calcium/lipid-binding domain, CaLB)"/>
    <property type="match status" value="1"/>
</dbReference>
<dbReference type="PROSITE" id="PS50004">
    <property type="entry name" value="C2"/>
    <property type="match status" value="1"/>
</dbReference>
<comment type="function">
    <text evidence="3">May be involved in inflammatory process. May regulate cell architecture and adhesion.</text>
</comment>
<comment type="subcellular location">
    <subcellularLocation>
        <location evidence="3">Nucleus</location>
    </subcellularLocation>
</comment>
<comment type="tissue specificity">
    <text evidence="3">Specifically expressed in endothelial cells.</text>
</comment>
<comment type="induction">
    <text evidence="3">Up-regulated by pro-inflammatory cytokines.</text>
</comment>
<comment type="similarity">
    <text evidence="4">Belongs to the C2CD4 family.</text>
</comment>
<keyword id="KW-0539">Nucleus</keyword>
<keyword id="KW-1267">Proteomics identification</keyword>
<keyword id="KW-1185">Reference proteome</keyword>
<name>C2C4A_HUMAN</name>
<reference key="1">
    <citation type="submission" date="2002-04" db="EMBL/GenBank/DDBJ databases">
        <authorList>
            <person name="Guo J.H."/>
            <person name="Yu L."/>
        </authorList>
    </citation>
    <scope>NUCLEOTIDE SEQUENCE [LARGE SCALE MRNA]</scope>
    <source>
        <tissue>Colon</tissue>
    </source>
</reference>
<reference key="2">
    <citation type="journal article" date="2006" name="Nature">
        <title>Analysis of the DNA sequence and duplication history of human chromosome 15.</title>
        <authorList>
            <person name="Zody M.C."/>
            <person name="Garber M."/>
            <person name="Sharpe T."/>
            <person name="Young S.K."/>
            <person name="Rowen L."/>
            <person name="O'Neill K."/>
            <person name="Whittaker C.A."/>
            <person name="Kamal M."/>
            <person name="Chang J.L."/>
            <person name="Cuomo C.A."/>
            <person name="Dewar K."/>
            <person name="FitzGerald M.G."/>
            <person name="Kodira C.D."/>
            <person name="Madan A."/>
            <person name="Qin S."/>
            <person name="Yang X."/>
            <person name="Abbasi N."/>
            <person name="Abouelleil A."/>
            <person name="Arachchi H.M."/>
            <person name="Baradarani L."/>
            <person name="Birditt B."/>
            <person name="Bloom S."/>
            <person name="Bloom T."/>
            <person name="Borowsky M.L."/>
            <person name="Burke J."/>
            <person name="Butler J."/>
            <person name="Cook A."/>
            <person name="DeArellano K."/>
            <person name="DeCaprio D."/>
            <person name="Dorris L. III"/>
            <person name="Dors M."/>
            <person name="Eichler E.E."/>
            <person name="Engels R."/>
            <person name="Fahey J."/>
            <person name="Fleetwood P."/>
            <person name="Friedman C."/>
            <person name="Gearin G."/>
            <person name="Hall J.L."/>
            <person name="Hensley G."/>
            <person name="Johnson E."/>
            <person name="Jones C."/>
            <person name="Kamat A."/>
            <person name="Kaur A."/>
            <person name="Locke D.P."/>
            <person name="Madan A."/>
            <person name="Munson G."/>
            <person name="Jaffe D.B."/>
            <person name="Lui A."/>
            <person name="Macdonald P."/>
            <person name="Mauceli E."/>
            <person name="Naylor J.W."/>
            <person name="Nesbitt R."/>
            <person name="Nicol R."/>
            <person name="O'Leary S.B."/>
            <person name="Ratcliffe A."/>
            <person name="Rounsley S."/>
            <person name="She X."/>
            <person name="Sneddon K.M.B."/>
            <person name="Stewart S."/>
            <person name="Sougnez C."/>
            <person name="Stone S.M."/>
            <person name="Topham K."/>
            <person name="Vincent D."/>
            <person name="Wang S."/>
            <person name="Zimmer A.R."/>
            <person name="Birren B.W."/>
            <person name="Hood L."/>
            <person name="Lander E.S."/>
            <person name="Nusbaum C."/>
        </authorList>
    </citation>
    <scope>NUCLEOTIDE SEQUENCE [LARGE SCALE GENOMIC DNA]</scope>
</reference>
<reference key="3">
    <citation type="journal article" date="2004" name="Gene">
        <title>A novel gene family induced by acute inflammation in endothelial cells.</title>
        <authorList>
            <person name="Warton K."/>
            <person name="Foster N.C."/>
            <person name="Gold W.A."/>
            <person name="Stanley K.K."/>
        </authorList>
    </citation>
    <scope>FUNCTION</scope>
    <scope>SUBCELLULAR LOCATION</scope>
    <scope>TISSUE SPECIFICITY</scope>
    <scope>INDUCTION</scope>
</reference>
<evidence type="ECO:0000255" key="1">
    <source>
        <dbReference type="PROSITE-ProRule" id="PRU00041"/>
    </source>
</evidence>
<evidence type="ECO:0000256" key="2">
    <source>
        <dbReference type="SAM" id="MobiDB-lite"/>
    </source>
</evidence>
<evidence type="ECO:0000269" key="3">
    <source>
    </source>
</evidence>
<evidence type="ECO:0000305" key="4"/>
<feature type="chain" id="PRO_0000324305" description="C2 calcium-dependent domain-containing protein 4A">
    <location>
        <begin position="1"/>
        <end position="369"/>
    </location>
</feature>
<feature type="domain" description="C2" evidence="1">
    <location>
        <begin position="253"/>
        <end position="369"/>
    </location>
</feature>
<feature type="region of interest" description="Disordered" evidence="2">
    <location>
        <begin position="151"/>
        <end position="176"/>
    </location>
</feature>
<feature type="region of interest" description="Disordered" evidence="2">
    <location>
        <begin position="197"/>
        <end position="240"/>
    </location>
</feature>
<feature type="compositionally biased region" description="Pro residues" evidence="2">
    <location>
        <begin position="153"/>
        <end position="168"/>
    </location>
</feature>
<feature type="compositionally biased region" description="Low complexity" evidence="2">
    <location>
        <begin position="220"/>
        <end position="237"/>
    </location>
</feature>
<feature type="sequence conflict" description="In Ref. 1; AAM28197." evidence="4" ref="1">
    <original>T</original>
    <variation>I</variation>
    <location>
        <position position="34"/>
    </location>
</feature>
<proteinExistence type="evidence at protein level"/>
<sequence length="369" mass="39744">MWCLERLRLGPECLRRSGDWLLPGRARGAKSRTTAACANVLTPDRIPEFCIPPRLMPRLALAALRNSWVEEAGMDEGAGRTDWDPRSQAALSLPHLPRVRTAYGFCALLESPHTRRKESLLLGGPPAPRPRAHTYGGGGGPDALLGTLRVPRAPGPATPAAPGCPRPPQDALARRPRGCRLLRVPDGLLSRALRAGRSRRLTRVRSVSSGNEDKERRAGSQSPARAPSTSPPSSRVPFPERLEAEGTVALGRAGDALRLAAEYCPGTGRLRLRLLRAESPAGGAPGPRAVSCRLSLVLRPPGTALRQCSTVVGRSRKASFDQDFCFDGLSEDEVRRLAVRVKARDEGRGRERGRLLGQGELSLGALLLL</sequence>
<accession>Q8NCU7</accession>
<gene>
    <name type="primary">C2CD4A</name>
    <name type="synonym">FAM148A</name>
    <name type="synonym">NLF1</name>
</gene>
<protein>
    <recommendedName>
        <fullName>C2 calcium-dependent domain-containing protein 4A</fullName>
    </recommendedName>
    <alternativeName>
        <fullName>Nuclear-localized factor 1</fullName>
    </alternativeName>
    <alternativeName>
        <fullName>Protein FAM148A</fullName>
    </alternativeName>
</protein>